<name>HBB_TRIOC</name>
<protein>
    <recommendedName>
        <fullName>Hemoglobin subunit beta</fullName>
    </recommendedName>
    <alternativeName>
        <fullName>Beta-globin</fullName>
    </alternativeName>
    <alternativeName>
        <fullName>Hemoglobin beta chain</fullName>
    </alternativeName>
</protein>
<comment type="function">
    <text>Involved in oxygen transport from the lung to the various peripheral tissues.</text>
</comment>
<comment type="subunit">
    <text>Heterotetramer of two alpha chains and two beta chains.</text>
</comment>
<comment type="tissue specificity">
    <text>Red blood cells.</text>
</comment>
<comment type="similarity">
    <text evidence="1">Belongs to the globin family.</text>
</comment>
<keyword id="KW-0903">Direct protein sequencing</keyword>
<keyword id="KW-0349">Heme</keyword>
<keyword id="KW-0408">Iron</keyword>
<keyword id="KW-0479">Metal-binding</keyword>
<keyword id="KW-0561">Oxygen transport</keyword>
<keyword id="KW-0813">Transport</keyword>
<gene>
    <name type="primary">HBB</name>
</gene>
<evidence type="ECO:0000255" key="1">
    <source>
        <dbReference type="PROSITE-ProRule" id="PRU00238"/>
    </source>
</evidence>
<proteinExistence type="evidence at protein level"/>
<feature type="chain" id="PRO_0000053141" description="Hemoglobin subunit beta">
    <location>
        <begin position="1"/>
        <end position="146"/>
    </location>
</feature>
<feature type="domain" description="Globin" evidence="1">
    <location>
        <begin position="2"/>
        <end position="146"/>
    </location>
</feature>
<feature type="binding site" description="distal binding residue">
    <location>
        <position position="63"/>
    </location>
    <ligand>
        <name>heme b</name>
        <dbReference type="ChEBI" id="CHEBI:60344"/>
    </ligand>
    <ligandPart>
        <name>Fe</name>
        <dbReference type="ChEBI" id="CHEBI:18248"/>
    </ligandPart>
</feature>
<feature type="binding site" description="proximal binding residue">
    <location>
        <position position="92"/>
    </location>
    <ligand>
        <name>heme b</name>
        <dbReference type="ChEBI" id="CHEBI:60344"/>
    </ligand>
    <ligandPart>
        <name>Fe</name>
        <dbReference type="ChEBI" id="CHEBI:18248"/>
    </ligandPart>
</feature>
<sequence>VHWTAEEKQLITGLWGKVNVADCGAEALARLLIVYPWTQRFFASFGNLSSPTAIIGNPMVRAHGKKVLTSFGEAVKNLDNIKNTFAQLSELHCDKLHVDPENFRLLGDILIIVLAAHFGKDFSPDCQAAWQKLVRAVAHALARKYH</sequence>
<accession>P68062</accession>
<accession>P07418</accession>
<organism>
    <name type="scientific">Trigonoceps occipitalis</name>
    <name type="common">White-headed vulture</name>
    <name type="synonym">Aegypius occipitalis</name>
    <dbReference type="NCBI Taxonomy" id="8975"/>
    <lineage>
        <taxon>Eukaryota</taxon>
        <taxon>Metazoa</taxon>
        <taxon>Chordata</taxon>
        <taxon>Craniata</taxon>
        <taxon>Vertebrata</taxon>
        <taxon>Euteleostomi</taxon>
        <taxon>Archelosauria</taxon>
        <taxon>Archosauria</taxon>
        <taxon>Dinosauria</taxon>
        <taxon>Saurischia</taxon>
        <taxon>Theropoda</taxon>
        <taxon>Coelurosauria</taxon>
        <taxon>Aves</taxon>
        <taxon>Neognathae</taxon>
        <taxon>Neoaves</taxon>
        <taxon>Telluraves</taxon>
        <taxon>Accipitrimorphae</taxon>
        <taxon>Accipitriformes</taxon>
        <taxon>Accipitridae</taxon>
        <taxon>Accipitrinae</taxon>
        <taxon>Trigonoceps</taxon>
    </lineage>
</organism>
<dbReference type="PIR" id="S04950">
    <property type="entry name" value="HBGRW"/>
</dbReference>
<dbReference type="SMR" id="P68062"/>
<dbReference type="GO" id="GO:0072562">
    <property type="term" value="C:blood microparticle"/>
    <property type="evidence" value="ECO:0007669"/>
    <property type="project" value="TreeGrafter"/>
</dbReference>
<dbReference type="GO" id="GO:0031838">
    <property type="term" value="C:haptoglobin-hemoglobin complex"/>
    <property type="evidence" value="ECO:0007669"/>
    <property type="project" value="TreeGrafter"/>
</dbReference>
<dbReference type="GO" id="GO:0005833">
    <property type="term" value="C:hemoglobin complex"/>
    <property type="evidence" value="ECO:0007669"/>
    <property type="project" value="InterPro"/>
</dbReference>
<dbReference type="GO" id="GO:0031720">
    <property type="term" value="F:haptoglobin binding"/>
    <property type="evidence" value="ECO:0007669"/>
    <property type="project" value="TreeGrafter"/>
</dbReference>
<dbReference type="GO" id="GO:0020037">
    <property type="term" value="F:heme binding"/>
    <property type="evidence" value="ECO:0007669"/>
    <property type="project" value="InterPro"/>
</dbReference>
<dbReference type="GO" id="GO:0046872">
    <property type="term" value="F:metal ion binding"/>
    <property type="evidence" value="ECO:0007669"/>
    <property type="project" value="UniProtKB-KW"/>
</dbReference>
<dbReference type="GO" id="GO:0043177">
    <property type="term" value="F:organic acid binding"/>
    <property type="evidence" value="ECO:0007669"/>
    <property type="project" value="TreeGrafter"/>
</dbReference>
<dbReference type="GO" id="GO:0019825">
    <property type="term" value="F:oxygen binding"/>
    <property type="evidence" value="ECO:0007669"/>
    <property type="project" value="InterPro"/>
</dbReference>
<dbReference type="GO" id="GO:0005344">
    <property type="term" value="F:oxygen carrier activity"/>
    <property type="evidence" value="ECO:0007669"/>
    <property type="project" value="UniProtKB-KW"/>
</dbReference>
<dbReference type="GO" id="GO:0004601">
    <property type="term" value="F:peroxidase activity"/>
    <property type="evidence" value="ECO:0007669"/>
    <property type="project" value="TreeGrafter"/>
</dbReference>
<dbReference type="GO" id="GO:0042744">
    <property type="term" value="P:hydrogen peroxide catabolic process"/>
    <property type="evidence" value="ECO:0007669"/>
    <property type="project" value="TreeGrafter"/>
</dbReference>
<dbReference type="CDD" id="cd08925">
    <property type="entry name" value="Hb-beta-like"/>
    <property type="match status" value="1"/>
</dbReference>
<dbReference type="FunFam" id="1.10.490.10:FF:000001">
    <property type="entry name" value="Hemoglobin subunit beta"/>
    <property type="match status" value="1"/>
</dbReference>
<dbReference type="Gene3D" id="1.10.490.10">
    <property type="entry name" value="Globins"/>
    <property type="match status" value="1"/>
</dbReference>
<dbReference type="InterPro" id="IPR000971">
    <property type="entry name" value="Globin"/>
</dbReference>
<dbReference type="InterPro" id="IPR009050">
    <property type="entry name" value="Globin-like_sf"/>
</dbReference>
<dbReference type="InterPro" id="IPR012292">
    <property type="entry name" value="Globin/Proto"/>
</dbReference>
<dbReference type="InterPro" id="IPR002337">
    <property type="entry name" value="Hemoglobin_b"/>
</dbReference>
<dbReference type="InterPro" id="IPR050056">
    <property type="entry name" value="Hemoglobin_oxygen_transport"/>
</dbReference>
<dbReference type="PANTHER" id="PTHR11442">
    <property type="entry name" value="HEMOGLOBIN FAMILY MEMBER"/>
    <property type="match status" value="1"/>
</dbReference>
<dbReference type="PANTHER" id="PTHR11442:SF7">
    <property type="entry name" value="HEMOGLOBIN SUBUNIT EPSILON"/>
    <property type="match status" value="1"/>
</dbReference>
<dbReference type="Pfam" id="PF00042">
    <property type="entry name" value="Globin"/>
    <property type="match status" value="1"/>
</dbReference>
<dbReference type="PRINTS" id="PR00814">
    <property type="entry name" value="BETAHAEM"/>
</dbReference>
<dbReference type="SUPFAM" id="SSF46458">
    <property type="entry name" value="Globin-like"/>
    <property type="match status" value="1"/>
</dbReference>
<dbReference type="PROSITE" id="PS01033">
    <property type="entry name" value="GLOBIN"/>
    <property type="match status" value="1"/>
</dbReference>
<reference key="1">
    <citation type="journal article" date="1989" name="Biol. Chem. Hoppe-Seyler">
        <title>High-altitude respiration of falconiformes. The primary structures and functional properties of the major and minor hemoglobin components of the adult White-Headed Vulture (Trigonoceps occipitalis, Aegypiinae).</title>
        <authorList>
            <person name="Hiebl I."/>
            <person name="Weber R.E."/>
            <person name="Schneeganss D."/>
            <person name="Braunitzer G."/>
        </authorList>
    </citation>
    <scope>PROTEIN SEQUENCE</scope>
</reference>